<feature type="signal peptide" evidence="2">
    <location>
        <begin position="1"/>
        <end position="26"/>
    </location>
</feature>
<feature type="chain" id="PRO_0000242480" description="Putative cation exchanger YDL206W">
    <location>
        <begin position="27"/>
        <end position="762"/>
    </location>
</feature>
<feature type="topological domain" description="Extracellular" evidence="2">
    <location>
        <begin position="27"/>
        <end position="30"/>
    </location>
</feature>
<feature type="transmembrane region" description="Helical" evidence="2">
    <location>
        <begin position="31"/>
        <end position="51"/>
    </location>
</feature>
<feature type="topological domain" description="Cytoplasmic" evidence="2">
    <location>
        <begin position="52"/>
        <end position="102"/>
    </location>
</feature>
<feature type="transmembrane region" description="Helical" evidence="2">
    <location>
        <begin position="103"/>
        <end position="123"/>
    </location>
</feature>
<feature type="topological domain" description="Extracellular" evidence="2">
    <location>
        <begin position="124"/>
        <end position="156"/>
    </location>
</feature>
<feature type="transmembrane region" description="Helical" evidence="2">
    <location>
        <begin position="157"/>
        <end position="177"/>
    </location>
</feature>
<feature type="topological domain" description="Cytoplasmic" evidence="2">
    <location>
        <position position="178"/>
    </location>
</feature>
<feature type="transmembrane region" description="Helical" evidence="2">
    <location>
        <begin position="179"/>
        <end position="199"/>
    </location>
</feature>
<feature type="topological domain" description="Extracellular" evidence="2">
    <location>
        <begin position="200"/>
        <end position="501"/>
    </location>
</feature>
<feature type="transmembrane region" description="Helical" evidence="2">
    <location>
        <begin position="502"/>
        <end position="522"/>
    </location>
</feature>
<feature type="topological domain" description="Cytoplasmic" evidence="2">
    <location>
        <begin position="523"/>
        <end position="554"/>
    </location>
</feature>
<feature type="transmembrane region" description="Helical" evidence="2">
    <location>
        <begin position="555"/>
        <end position="575"/>
    </location>
</feature>
<feature type="topological domain" description="Extracellular" evidence="2">
    <location>
        <begin position="576"/>
        <end position="589"/>
    </location>
</feature>
<feature type="transmembrane region" description="Helical" evidence="2">
    <location>
        <begin position="590"/>
        <end position="610"/>
    </location>
</feature>
<feature type="topological domain" description="Cytoplasmic" evidence="2">
    <location>
        <begin position="611"/>
        <end position="615"/>
    </location>
</feature>
<feature type="transmembrane region" description="Helical" evidence="2">
    <location>
        <begin position="616"/>
        <end position="636"/>
    </location>
</feature>
<feature type="topological domain" description="Extracellular" evidence="2">
    <location>
        <begin position="637"/>
        <end position="650"/>
    </location>
</feature>
<feature type="transmembrane region" description="Helical" evidence="2">
    <location>
        <begin position="651"/>
        <end position="671"/>
    </location>
</feature>
<feature type="topological domain" description="Cytoplasmic" evidence="2">
    <location>
        <begin position="672"/>
        <end position="709"/>
    </location>
</feature>
<feature type="transmembrane region" description="Helical" evidence="2">
    <location>
        <begin position="710"/>
        <end position="730"/>
    </location>
</feature>
<feature type="topological domain" description="Extracellular" evidence="2">
    <location>
        <begin position="731"/>
        <end position="738"/>
    </location>
</feature>
<feature type="transmembrane region" description="Helical" evidence="2">
    <location>
        <begin position="739"/>
        <end position="759"/>
    </location>
</feature>
<feature type="topological domain" description="Cytoplasmic" evidence="2">
    <location>
        <begin position="760"/>
        <end position="762"/>
    </location>
</feature>
<feature type="glycosylation site" description="N-linked (GlcNAc...) asparagine" evidence="2">
    <location>
        <position position="28"/>
    </location>
</feature>
<feature type="glycosylation site" description="N-linked (GlcNAc...) asparagine" evidence="2">
    <location>
        <position position="148"/>
    </location>
</feature>
<feature type="glycosylation site" description="N-linked (GlcNAc...) asparagine" evidence="2">
    <location>
        <position position="280"/>
    </location>
</feature>
<feature type="glycosylation site" description="N-linked (GlcNAc...) asparagine" evidence="2">
    <location>
        <position position="329"/>
    </location>
</feature>
<feature type="glycosylation site" description="N-linked (GlcNAc...) asparagine" evidence="2">
    <location>
        <position position="645"/>
    </location>
</feature>
<comment type="function">
    <text evidence="1">Putative cation exchanger.</text>
</comment>
<comment type="subcellular location">
    <subcellularLocation>
        <location evidence="3">Membrane</location>
        <topology evidence="3">Multi-pass membrane protein</topology>
    </subcellularLocation>
</comment>
<comment type="similarity">
    <text evidence="3">Belongs to the Ca(2+):cation antiporter (CaCA) (TC 2.A.19) family.</text>
</comment>
<accession>Q12424</accession>
<accession>D6VRE8</accession>
<keyword id="KW-0325">Glycoprotein</keyword>
<keyword id="KW-0406">Ion transport</keyword>
<keyword id="KW-0472">Membrane</keyword>
<keyword id="KW-1185">Reference proteome</keyword>
<keyword id="KW-0732">Signal</keyword>
<keyword id="KW-0812">Transmembrane</keyword>
<keyword id="KW-1133">Transmembrane helix</keyword>
<keyword id="KW-0813">Transport</keyword>
<protein>
    <recommendedName>
        <fullName>Putative cation exchanger YDL206W</fullName>
    </recommendedName>
</protein>
<sequence length="762" mass="85984">MHKPLRWLITIAFYVSNVILIGYSLSSNGSISEFYLHSVVLIECFSLLGVVTSDCLTPSLSYISSNIFHISDRVSGMTLLALGNALPDITSTYQSMKSGVTSLAIGELFGGIFFLLTVVIGLMGCVATIQFQHDKSIETYTEESFDQNLSYDRSNYILDVGIFTFMLLVSGTFLADGRLYFWECIVMVLTYCCCAVYLIKSYKYPCEINDALEREVEIKKTVLANNHITVPNRFTLTTTSDITSTDDGIRYVRPLGDTQIDEDNAISLDPTRLPSKSLDNISRFNQGIPERRDLIRRRIRGYLRSHYHGWVRMTLQDLLNIWEKQNLFNNTVKSLSLPSDDTHLFTKASLDEEGRPLIRKRMNSLQPKDFYKYLSLRNGENSNALDTAISAPQNEYQTYYNEPTSLFLTVPQKKTSKKSLSCDRIPNLVRSNNIILNDEATRTQESTNALNSISDVIDNSLLQYERDDIILDRTLSLCSTKSRTAWHSFQLYNYLTDVSLEIGFFEFLSLLVTTPVSIILYLSIPSEISQTDHDLPLSYLQNIQLIASPIILNQLITNNFSFWLLILSLVIAILLYFKTRTIPNKFNSDIIFTVAFLLSLACLSKAVHIIVVTLTHWINVFNISETILGLTIFTWGNSIGDLVSNITFVKIGVLEIAIGACFGSPLLYFLFGVGFDGIMIMLGDKTGKIVSGRDSNILMHHIDFKVDKNLINTGVGILIAFLIFTVLIPLNDWKIDKKISIALLTLYIVVTCISVFLEVHQV</sequence>
<name>YD206_YEAST</name>
<organism>
    <name type="scientific">Saccharomyces cerevisiae (strain ATCC 204508 / S288c)</name>
    <name type="common">Baker's yeast</name>
    <dbReference type="NCBI Taxonomy" id="559292"/>
    <lineage>
        <taxon>Eukaryota</taxon>
        <taxon>Fungi</taxon>
        <taxon>Dikarya</taxon>
        <taxon>Ascomycota</taxon>
        <taxon>Saccharomycotina</taxon>
        <taxon>Saccharomycetes</taxon>
        <taxon>Saccharomycetales</taxon>
        <taxon>Saccharomycetaceae</taxon>
        <taxon>Saccharomyces</taxon>
    </lineage>
</organism>
<reference key="1">
    <citation type="journal article" date="1997" name="Yeast">
        <title>The nucleotide sequence of a 39 kb segment of yeast chromosome IV: 12 new open reading frames, nine known genes and one gene for Gly-tRNA.</title>
        <authorList>
            <person name="Bahr A."/>
            <person name="Moeller-Rieker S."/>
            <person name="Hankeln T."/>
            <person name="Kraemer C."/>
            <person name="Protin U."/>
            <person name="Schmidt E.R."/>
        </authorList>
    </citation>
    <scope>NUCLEOTIDE SEQUENCE [GENOMIC DNA]</scope>
    <source>
        <strain>ATCC 96604 / S288c / FY1679</strain>
    </source>
</reference>
<reference key="2">
    <citation type="journal article" date="1997" name="Nature">
        <title>The nucleotide sequence of Saccharomyces cerevisiae chromosome IV.</title>
        <authorList>
            <person name="Jacq C."/>
            <person name="Alt-Moerbe J."/>
            <person name="Andre B."/>
            <person name="Arnold W."/>
            <person name="Bahr A."/>
            <person name="Ballesta J.P.G."/>
            <person name="Bargues M."/>
            <person name="Baron L."/>
            <person name="Becker A."/>
            <person name="Biteau N."/>
            <person name="Bloecker H."/>
            <person name="Blugeon C."/>
            <person name="Boskovic J."/>
            <person name="Brandt P."/>
            <person name="Brueckner M."/>
            <person name="Buitrago M.J."/>
            <person name="Coster F."/>
            <person name="Delaveau T."/>
            <person name="del Rey F."/>
            <person name="Dujon B."/>
            <person name="Eide L.G."/>
            <person name="Garcia-Cantalejo J.M."/>
            <person name="Goffeau A."/>
            <person name="Gomez-Peris A."/>
            <person name="Granotier C."/>
            <person name="Hanemann V."/>
            <person name="Hankeln T."/>
            <person name="Hoheisel J.D."/>
            <person name="Jaeger W."/>
            <person name="Jimenez A."/>
            <person name="Jonniaux J.-L."/>
            <person name="Kraemer C."/>
            <person name="Kuester H."/>
            <person name="Laamanen P."/>
            <person name="Legros Y."/>
            <person name="Louis E.J."/>
            <person name="Moeller-Rieker S."/>
            <person name="Monnet A."/>
            <person name="Moro M."/>
            <person name="Mueller-Auer S."/>
            <person name="Nussbaumer B."/>
            <person name="Paricio N."/>
            <person name="Paulin L."/>
            <person name="Perea J."/>
            <person name="Perez-Alonso M."/>
            <person name="Perez-Ortin J.E."/>
            <person name="Pohl T.M."/>
            <person name="Prydz H."/>
            <person name="Purnelle B."/>
            <person name="Rasmussen S.W."/>
            <person name="Remacha M.A."/>
            <person name="Revuelta J.L."/>
            <person name="Rieger M."/>
            <person name="Salom D."/>
            <person name="Saluz H.P."/>
            <person name="Saiz J.E."/>
            <person name="Saren A.-M."/>
            <person name="Schaefer M."/>
            <person name="Scharfe M."/>
            <person name="Schmidt E.R."/>
            <person name="Schneider C."/>
            <person name="Scholler P."/>
            <person name="Schwarz S."/>
            <person name="Soler-Mira A."/>
            <person name="Urrestarazu L.A."/>
            <person name="Verhasselt P."/>
            <person name="Vissers S."/>
            <person name="Voet M."/>
            <person name="Volckaert G."/>
            <person name="Wagner G."/>
            <person name="Wambutt R."/>
            <person name="Wedler E."/>
            <person name="Wedler H."/>
            <person name="Woelfl S."/>
            <person name="Harris D.E."/>
            <person name="Bowman S."/>
            <person name="Brown D."/>
            <person name="Churcher C.M."/>
            <person name="Connor R."/>
            <person name="Dedman K."/>
            <person name="Gentles S."/>
            <person name="Hamlin N."/>
            <person name="Hunt S."/>
            <person name="Jones L."/>
            <person name="McDonald S."/>
            <person name="Murphy L.D."/>
            <person name="Niblett D."/>
            <person name="Odell C."/>
            <person name="Oliver K."/>
            <person name="Rajandream M.A."/>
            <person name="Richards C."/>
            <person name="Shore L."/>
            <person name="Walsh S.V."/>
            <person name="Barrell B.G."/>
            <person name="Dietrich F.S."/>
            <person name="Mulligan J.T."/>
            <person name="Allen E."/>
            <person name="Araujo R."/>
            <person name="Aviles E."/>
            <person name="Berno A."/>
            <person name="Carpenter J."/>
            <person name="Chen E."/>
            <person name="Cherry J.M."/>
            <person name="Chung E."/>
            <person name="Duncan M."/>
            <person name="Hunicke-Smith S."/>
            <person name="Hyman R.W."/>
            <person name="Komp C."/>
            <person name="Lashkari D."/>
            <person name="Lew H."/>
            <person name="Lin D."/>
            <person name="Mosedale D."/>
            <person name="Nakahara K."/>
            <person name="Namath A."/>
            <person name="Oefner P."/>
            <person name="Oh C."/>
            <person name="Petel F.X."/>
            <person name="Roberts D."/>
            <person name="Schramm S."/>
            <person name="Schroeder M."/>
            <person name="Shogren T."/>
            <person name="Shroff N."/>
            <person name="Winant A."/>
            <person name="Yelton M.A."/>
            <person name="Botstein D."/>
            <person name="Davis R.W."/>
            <person name="Johnston M."/>
            <person name="Andrews S."/>
            <person name="Brinkman R."/>
            <person name="Cooper J."/>
            <person name="Ding H."/>
            <person name="Du Z."/>
            <person name="Favello A."/>
            <person name="Fulton L."/>
            <person name="Gattung S."/>
            <person name="Greco T."/>
            <person name="Hallsworth K."/>
            <person name="Hawkins J."/>
            <person name="Hillier L.W."/>
            <person name="Jier M."/>
            <person name="Johnson D."/>
            <person name="Johnston L."/>
            <person name="Kirsten J."/>
            <person name="Kucaba T."/>
            <person name="Langston Y."/>
            <person name="Latreille P."/>
            <person name="Le T."/>
            <person name="Mardis E."/>
            <person name="Menezes S."/>
            <person name="Miller N."/>
            <person name="Nhan M."/>
            <person name="Pauley A."/>
            <person name="Peluso D."/>
            <person name="Rifkin L."/>
            <person name="Riles L."/>
            <person name="Taich A."/>
            <person name="Trevaskis E."/>
            <person name="Vignati D."/>
            <person name="Wilcox L."/>
            <person name="Wohldman P."/>
            <person name="Vaudin M."/>
            <person name="Wilson R."/>
            <person name="Waterston R."/>
            <person name="Albermann K."/>
            <person name="Hani J."/>
            <person name="Heumann K."/>
            <person name="Kleine K."/>
            <person name="Mewes H.-W."/>
            <person name="Zollner A."/>
            <person name="Zaccaria P."/>
        </authorList>
    </citation>
    <scope>NUCLEOTIDE SEQUENCE [LARGE SCALE GENOMIC DNA]</scope>
    <source>
        <strain>ATCC 204508 / S288c</strain>
    </source>
</reference>
<reference key="3">
    <citation type="journal article" date="2014" name="G3 (Bethesda)">
        <title>The reference genome sequence of Saccharomyces cerevisiae: Then and now.</title>
        <authorList>
            <person name="Engel S.R."/>
            <person name="Dietrich F.S."/>
            <person name="Fisk D.G."/>
            <person name="Binkley G."/>
            <person name="Balakrishnan R."/>
            <person name="Costanzo M.C."/>
            <person name="Dwight S.S."/>
            <person name="Hitz B.C."/>
            <person name="Karra K."/>
            <person name="Nash R.S."/>
            <person name="Weng S."/>
            <person name="Wong E.D."/>
            <person name="Lloyd P."/>
            <person name="Skrzypek M.S."/>
            <person name="Miyasato S.R."/>
            <person name="Simison M."/>
            <person name="Cherry J.M."/>
        </authorList>
    </citation>
    <scope>GENOME REANNOTATION</scope>
    <source>
        <strain>ATCC 204508 / S288c</strain>
    </source>
</reference>
<reference key="4">
    <citation type="journal article" date="2008" name="Mol. Cell. Proteomics">
        <title>A multidimensional chromatography technology for in-depth phosphoproteome analysis.</title>
        <authorList>
            <person name="Albuquerque C.P."/>
            <person name="Smolka M.B."/>
            <person name="Payne S.H."/>
            <person name="Bafna V."/>
            <person name="Eng J."/>
            <person name="Zhou H."/>
        </authorList>
    </citation>
    <scope>IDENTIFICATION BY MASS SPECTROMETRY [LARGE SCALE ANALYSIS]</scope>
</reference>
<gene>
    <name type="ordered locus">YDL206W</name>
    <name type="ORF">D1053</name>
</gene>
<dbReference type="EMBL" id="X99000">
    <property type="protein sequence ID" value="CAA67485.1"/>
    <property type="molecule type" value="Genomic_DNA"/>
</dbReference>
<dbReference type="EMBL" id="Z74254">
    <property type="protein sequence ID" value="CAA98784.1"/>
    <property type="molecule type" value="Genomic_DNA"/>
</dbReference>
<dbReference type="EMBL" id="BK006938">
    <property type="protein sequence ID" value="DAA11658.1"/>
    <property type="molecule type" value="Genomic_DNA"/>
</dbReference>
<dbReference type="PIR" id="S67765">
    <property type="entry name" value="S67765"/>
</dbReference>
<dbReference type="BioGRID" id="31840">
    <property type="interactions" value="62"/>
</dbReference>
<dbReference type="DIP" id="DIP-8659N"/>
<dbReference type="FunCoup" id="Q12424">
    <property type="interactions" value="282"/>
</dbReference>
<dbReference type="IntAct" id="Q12424">
    <property type="interactions" value="1"/>
</dbReference>
<dbReference type="MINT" id="Q12424"/>
<dbReference type="STRING" id="4932.YDL206W"/>
<dbReference type="GlyGen" id="Q12424">
    <property type="glycosylation" value="5 sites"/>
</dbReference>
<dbReference type="iPTMnet" id="Q12424"/>
<dbReference type="PaxDb" id="4932-YDL206W"/>
<dbReference type="PeptideAtlas" id="Q12424"/>
<dbReference type="EnsemblFungi" id="YDL206W_mRNA">
    <property type="protein sequence ID" value="YDL206W"/>
    <property type="gene ID" value="YDL206W"/>
</dbReference>
<dbReference type="KEGG" id="sce:YDL206W"/>
<dbReference type="AGR" id="SGD:S000002365"/>
<dbReference type="SGD" id="S000002365">
    <property type="gene designation" value="YDL206W"/>
</dbReference>
<dbReference type="VEuPathDB" id="FungiDB:YDL206W"/>
<dbReference type="eggNOG" id="KOG2399">
    <property type="taxonomic scope" value="Eukaryota"/>
</dbReference>
<dbReference type="GeneTree" id="ENSGT00940000157433"/>
<dbReference type="HOGENOM" id="CLU_004979_2_1_1"/>
<dbReference type="InParanoid" id="Q12424"/>
<dbReference type="OMA" id="GWVRMTL"/>
<dbReference type="OrthoDB" id="407410at2759"/>
<dbReference type="BioCyc" id="YEAST:G3O-29588-MONOMER"/>
<dbReference type="BioGRID-ORCS" id="851321">
    <property type="hits" value="4 hits in 10 CRISPR screens"/>
</dbReference>
<dbReference type="PRO" id="PR:Q12424"/>
<dbReference type="Proteomes" id="UP000002311">
    <property type="component" value="Chromosome IV"/>
</dbReference>
<dbReference type="RNAct" id="Q12424">
    <property type="molecule type" value="protein"/>
</dbReference>
<dbReference type="GO" id="GO:0005783">
    <property type="term" value="C:endoplasmic reticulum"/>
    <property type="evidence" value="ECO:0000314"/>
    <property type="project" value="SGD"/>
</dbReference>
<dbReference type="GO" id="GO:0000329">
    <property type="term" value="C:fungal-type vacuole membrane"/>
    <property type="evidence" value="ECO:0007005"/>
    <property type="project" value="SGD"/>
</dbReference>
<dbReference type="GO" id="GO:0005794">
    <property type="term" value="C:Golgi apparatus"/>
    <property type="evidence" value="ECO:0000314"/>
    <property type="project" value="SGD"/>
</dbReference>
<dbReference type="GO" id="GO:0016020">
    <property type="term" value="C:membrane"/>
    <property type="evidence" value="ECO:0000318"/>
    <property type="project" value="GO_Central"/>
</dbReference>
<dbReference type="GO" id="GO:0008324">
    <property type="term" value="F:monoatomic cation transmembrane transporter activity"/>
    <property type="evidence" value="ECO:0000318"/>
    <property type="project" value="GO_Central"/>
</dbReference>
<dbReference type="GO" id="GO:0097720">
    <property type="term" value="P:calcineurin-mediated signaling"/>
    <property type="evidence" value="ECO:0000315"/>
    <property type="project" value="SGD"/>
</dbReference>
<dbReference type="GO" id="GO:0006874">
    <property type="term" value="P:intracellular calcium ion homeostasis"/>
    <property type="evidence" value="ECO:0000318"/>
    <property type="project" value="GO_Central"/>
</dbReference>
<dbReference type="GO" id="GO:0006812">
    <property type="term" value="P:monoatomic cation transport"/>
    <property type="evidence" value="ECO:0000318"/>
    <property type="project" value="GO_Central"/>
</dbReference>
<dbReference type="FunFam" id="1.20.1420.30:FF:000033">
    <property type="entry name" value="YDL206W-like protein"/>
    <property type="match status" value="1"/>
</dbReference>
<dbReference type="Gene3D" id="1.20.1420.30">
    <property type="entry name" value="NCX, central ion-binding region"/>
    <property type="match status" value="2"/>
</dbReference>
<dbReference type="InterPro" id="IPR051359">
    <property type="entry name" value="CaCA_antiporter"/>
</dbReference>
<dbReference type="InterPro" id="IPR004837">
    <property type="entry name" value="NaCa_Exmemb"/>
</dbReference>
<dbReference type="InterPro" id="IPR044880">
    <property type="entry name" value="NCX_ion-bd_dom_sf"/>
</dbReference>
<dbReference type="PANTHER" id="PTHR12266:SF0">
    <property type="entry name" value="MITOCHONDRIAL SODIUM_CALCIUM EXCHANGER PROTEIN"/>
    <property type="match status" value="1"/>
</dbReference>
<dbReference type="PANTHER" id="PTHR12266">
    <property type="entry name" value="NA+/CA2+ K+ INDEPENDENT EXCHANGER"/>
    <property type="match status" value="1"/>
</dbReference>
<dbReference type="Pfam" id="PF01699">
    <property type="entry name" value="Na_Ca_ex"/>
    <property type="match status" value="2"/>
</dbReference>
<proteinExistence type="evidence at protein level"/>
<evidence type="ECO:0000250" key="1"/>
<evidence type="ECO:0000255" key="2"/>
<evidence type="ECO:0000305" key="3"/>